<reference key="1">
    <citation type="submission" date="1997-09" db="EMBL/GenBank/DDBJ databases">
        <title>Ralstonia eutropha H16 urease genes and proteins.</title>
        <authorList>
            <person name="Piettre C."/>
            <person name="Toussaint A."/>
        </authorList>
    </citation>
    <scope>NUCLEOTIDE SEQUENCE [LARGE SCALE GENOMIC DNA]</scope>
</reference>
<reference key="2">
    <citation type="journal article" date="2006" name="Nat. Biotechnol.">
        <title>Genome sequence of the bioplastic-producing 'Knallgas' bacterium Ralstonia eutropha H16.</title>
        <authorList>
            <person name="Pohlmann A."/>
            <person name="Fricke W.F."/>
            <person name="Reinecke F."/>
            <person name="Kusian B."/>
            <person name="Liesegang H."/>
            <person name="Cramm R."/>
            <person name="Eitinger T."/>
            <person name="Ewering C."/>
            <person name="Poetter M."/>
            <person name="Schwartz E."/>
            <person name="Strittmatter A."/>
            <person name="Voss I."/>
            <person name="Gottschalk G."/>
            <person name="Steinbuechel A."/>
            <person name="Friedrich B."/>
            <person name="Bowien B."/>
        </authorList>
    </citation>
    <scope>NUCLEOTIDE SEQUENCE [LARGE SCALE GENOMIC DNA]</scope>
    <source>
        <strain>ATCC 17699 / DSM 428 / KCTC 22496 / NCIMB 10442 / H16 / Stanier 337</strain>
    </source>
</reference>
<name>UREG_CUPNH</name>
<proteinExistence type="inferred from homology"/>
<feature type="chain" id="PRO_0000347432" description="Urease accessory protein UreG">
    <location>
        <begin position="1"/>
        <end position="209"/>
    </location>
</feature>
<feature type="binding site" evidence="1">
    <location>
        <begin position="18"/>
        <end position="25"/>
    </location>
    <ligand>
        <name>GTP</name>
        <dbReference type="ChEBI" id="CHEBI:37565"/>
    </ligand>
</feature>
<feature type="sequence conflict" description="In Ref. 1; CAA74067." evidence="2" ref="1">
    <original>I</original>
    <variation>F</variation>
    <location>
        <position position="68"/>
    </location>
</feature>
<feature type="sequence conflict" description="In Ref. 1; CAA74067." evidence="2" ref="1">
    <original>RF</original>
    <variation>PL</variation>
    <location>
        <begin position="199"/>
        <end position="200"/>
    </location>
</feature>
<protein>
    <recommendedName>
        <fullName evidence="1">Urease accessory protein UreG</fullName>
    </recommendedName>
</protein>
<sequence length="209" mass="22438">MTQARTKKNPPLRVGVGGPVGSGKTTLLEMLCKAMRDRYDLVAITNDIYTKEDQRLLTVSGALPAERIMGVETGGCPHTAIREDASINLEAVDRMLARFPDADVVFIESGGDNLAATFSPELSDLTIYVIDVAGGEKIPRKGGPGITKSDLLVINKTDLAPYVGASLEVMESDARKMRGARPFVMGSVKSGQGLDEVIRFIERQGMLGV</sequence>
<organism>
    <name type="scientific">Cupriavidus necator (strain ATCC 17699 / DSM 428 / KCTC 22496 / NCIMB 10442 / H16 / Stanier 337)</name>
    <name type="common">Ralstonia eutropha</name>
    <dbReference type="NCBI Taxonomy" id="381666"/>
    <lineage>
        <taxon>Bacteria</taxon>
        <taxon>Pseudomonadati</taxon>
        <taxon>Pseudomonadota</taxon>
        <taxon>Betaproteobacteria</taxon>
        <taxon>Burkholderiales</taxon>
        <taxon>Burkholderiaceae</taxon>
        <taxon>Cupriavidus</taxon>
    </lineage>
</organism>
<evidence type="ECO:0000255" key="1">
    <source>
        <dbReference type="HAMAP-Rule" id="MF_01389"/>
    </source>
</evidence>
<evidence type="ECO:0000305" key="2"/>
<gene>
    <name evidence="1" type="primary">ureG</name>
    <name type="ordered locus">H16_A1087</name>
</gene>
<comment type="function">
    <text evidence="1">Facilitates the functional incorporation of the urease nickel metallocenter. This process requires GTP hydrolysis, probably effectuated by UreG.</text>
</comment>
<comment type="subunit">
    <text evidence="1">Homodimer. UreD, UreF and UreG form a complex that acts as a GTP-hydrolysis-dependent molecular chaperone, activating the urease apoprotein by helping to assemble the nickel containing metallocenter of UreC. The UreE protein probably delivers the nickel.</text>
</comment>
<comment type="subcellular location">
    <subcellularLocation>
        <location evidence="1">Cytoplasm</location>
    </subcellularLocation>
</comment>
<comment type="similarity">
    <text evidence="1">Belongs to the SIMIBI class G3E GTPase family. UreG subfamily.</text>
</comment>
<dbReference type="EMBL" id="Y13732">
    <property type="protein sequence ID" value="CAA74067.1"/>
    <property type="molecule type" value="Genomic_DNA"/>
</dbReference>
<dbReference type="EMBL" id="AM260479">
    <property type="protein sequence ID" value="CAJ92228.1"/>
    <property type="molecule type" value="Genomic_DNA"/>
</dbReference>
<dbReference type="RefSeq" id="WP_010809095.1">
    <property type="nucleotide sequence ID" value="NZ_CP039287.1"/>
</dbReference>
<dbReference type="SMR" id="Q0KCP3"/>
<dbReference type="STRING" id="381666.H16_A1087"/>
<dbReference type="KEGG" id="reh:H16_A1087"/>
<dbReference type="eggNOG" id="COG0378">
    <property type="taxonomic scope" value="Bacteria"/>
</dbReference>
<dbReference type="HOGENOM" id="CLU_072144_1_0_4"/>
<dbReference type="OrthoDB" id="9802035at2"/>
<dbReference type="Proteomes" id="UP000008210">
    <property type="component" value="Chromosome 1"/>
</dbReference>
<dbReference type="GO" id="GO:0005737">
    <property type="term" value="C:cytoplasm"/>
    <property type="evidence" value="ECO:0007669"/>
    <property type="project" value="UniProtKB-SubCell"/>
</dbReference>
<dbReference type="GO" id="GO:0005525">
    <property type="term" value="F:GTP binding"/>
    <property type="evidence" value="ECO:0007669"/>
    <property type="project" value="UniProtKB-KW"/>
</dbReference>
<dbReference type="GO" id="GO:0003924">
    <property type="term" value="F:GTPase activity"/>
    <property type="evidence" value="ECO:0007669"/>
    <property type="project" value="InterPro"/>
</dbReference>
<dbReference type="GO" id="GO:0016151">
    <property type="term" value="F:nickel cation binding"/>
    <property type="evidence" value="ECO:0007669"/>
    <property type="project" value="UniProtKB-UniRule"/>
</dbReference>
<dbReference type="GO" id="GO:0043419">
    <property type="term" value="P:urea catabolic process"/>
    <property type="evidence" value="ECO:0007669"/>
    <property type="project" value="InterPro"/>
</dbReference>
<dbReference type="CDD" id="cd05540">
    <property type="entry name" value="UreG"/>
    <property type="match status" value="1"/>
</dbReference>
<dbReference type="FunFam" id="3.40.50.300:FF:000208">
    <property type="entry name" value="Urease accessory protein UreG"/>
    <property type="match status" value="1"/>
</dbReference>
<dbReference type="Gene3D" id="3.40.50.300">
    <property type="entry name" value="P-loop containing nucleotide triphosphate hydrolases"/>
    <property type="match status" value="1"/>
</dbReference>
<dbReference type="HAMAP" id="MF_01389">
    <property type="entry name" value="UreG"/>
    <property type="match status" value="1"/>
</dbReference>
<dbReference type="InterPro" id="IPR003495">
    <property type="entry name" value="CobW/HypB/UreG_nucleotide-bd"/>
</dbReference>
<dbReference type="InterPro" id="IPR027417">
    <property type="entry name" value="P-loop_NTPase"/>
</dbReference>
<dbReference type="InterPro" id="IPR004400">
    <property type="entry name" value="UreG"/>
</dbReference>
<dbReference type="NCBIfam" id="TIGR00101">
    <property type="entry name" value="ureG"/>
    <property type="match status" value="1"/>
</dbReference>
<dbReference type="PANTHER" id="PTHR31715">
    <property type="entry name" value="UREASE ACCESSORY PROTEIN G"/>
    <property type="match status" value="1"/>
</dbReference>
<dbReference type="PANTHER" id="PTHR31715:SF0">
    <property type="entry name" value="UREASE ACCESSORY PROTEIN G"/>
    <property type="match status" value="1"/>
</dbReference>
<dbReference type="Pfam" id="PF02492">
    <property type="entry name" value="cobW"/>
    <property type="match status" value="1"/>
</dbReference>
<dbReference type="PIRSF" id="PIRSF005624">
    <property type="entry name" value="Ni-bind_GTPase"/>
    <property type="match status" value="1"/>
</dbReference>
<dbReference type="SUPFAM" id="SSF52540">
    <property type="entry name" value="P-loop containing nucleoside triphosphate hydrolases"/>
    <property type="match status" value="1"/>
</dbReference>
<keyword id="KW-0143">Chaperone</keyword>
<keyword id="KW-0963">Cytoplasm</keyword>
<keyword id="KW-0342">GTP-binding</keyword>
<keyword id="KW-0996">Nickel insertion</keyword>
<keyword id="KW-0547">Nucleotide-binding</keyword>
<keyword id="KW-1185">Reference proteome</keyword>
<accession>Q0KCP3</accession>
<accession>O30340</accession>